<accession>A7FKR4</accession>
<keyword id="KW-0067">ATP-binding</keyword>
<keyword id="KW-0436">Ligase</keyword>
<keyword id="KW-0460">Magnesium</keyword>
<keyword id="KW-0479">Metal-binding</keyword>
<keyword id="KW-0547">Nucleotide-binding</keyword>
<keyword id="KW-0816">Tricarboxylic acid cycle</keyword>
<comment type="function">
    <text evidence="1">Succinyl-CoA synthetase functions in the citric acid cycle (TCA), coupling the hydrolysis of succinyl-CoA to the synthesis of either ATP or GTP and thus represents the only step of substrate-level phosphorylation in the TCA. The beta subunit provides nucleotide specificity of the enzyme and binds the substrate succinate, while the binding sites for coenzyme A and phosphate are found in the alpha subunit.</text>
</comment>
<comment type="catalytic activity">
    <reaction evidence="1">
        <text>succinate + ATP + CoA = succinyl-CoA + ADP + phosphate</text>
        <dbReference type="Rhea" id="RHEA:17661"/>
        <dbReference type="ChEBI" id="CHEBI:30031"/>
        <dbReference type="ChEBI" id="CHEBI:30616"/>
        <dbReference type="ChEBI" id="CHEBI:43474"/>
        <dbReference type="ChEBI" id="CHEBI:57287"/>
        <dbReference type="ChEBI" id="CHEBI:57292"/>
        <dbReference type="ChEBI" id="CHEBI:456216"/>
        <dbReference type="EC" id="6.2.1.5"/>
    </reaction>
    <physiologicalReaction direction="right-to-left" evidence="1">
        <dbReference type="Rhea" id="RHEA:17663"/>
    </physiologicalReaction>
</comment>
<comment type="catalytic activity">
    <reaction evidence="1">
        <text>GTP + succinate + CoA = succinyl-CoA + GDP + phosphate</text>
        <dbReference type="Rhea" id="RHEA:22120"/>
        <dbReference type="ChEBI" id="CHEBI:30031"/>
        <dbReference type="ChEBI" id="CHEBI:37565"/>
        <dbReference type="ChEBI" id="CHEBI:43474"/>
        <dbReference type="ChEBI" id="CHEBI:57287"/>
        <dbReference type="ChEBI" id="CHEBI:57292"/>
        <dbReference type="ChEBI" id="CHEBI:58189"/>
    </reaction>
    <physiologicalReaction direction="right-to-left" evidence="1">
        <dbReference type="Rhea" id="RHEA:22122"/>
    </physiologicalReaction>
</comment>
<comment type="cofactor">
    <cofactor evidence="1">
        <name>Mg(2+)</name>
        <dbReference type="ChEBI" id="CHEBI:18420"/>
    </cofactor>
    <text evidence="1">Binds 1 Mg(2+) ion per subunit.</text>
</comment>
<comment type="pathway">
    <text evidence="1">Carbohydrate metabolism; tricarboxylic acid cycle; succinate from succinyl-CoA (ligase route): step 1/1.</text>
</comment>
<comment type="subunit">
    <text evidence="1">Heterotetramer of two alpha and two beta subunits.</text>
</comment>
<comment type="similarity">
    <text evidence="1">Belongs to the succinate/malate CoA ligase beta subunit family.</text>
</comment>
<organism>
    <name type="scientific">Yersinia pseudotuberculosis serotype O:1b (strain IP 31758)</name>
    <dbReference type="NCBI Taxonomy" id="349747"/>
    <lineage>
        <taxon>Bacteria</taxon>
        <taxon>Pseudomonadati</taxon>
        <taxon>Pseudomonadota</taxon>
        <taxon>Gammaproteobacteria</taxon>
        <taxon>Enterobacterales</taxon>
        <taxon>Yersiniaceae</taxon>
        <taxon>Yersinia</taxon>
    </lineage>
</organism>
<sequence length="388" mass="41406">MNLHEYQAKQLFARYGMPAPTGYACTTPREAEEAASKIGAGPWVVKCQVHAGGRGKAGGVKLVNSKEDIRAFAEQWLGKKLVTYQTDANGQPVHQILVEAATDIDKELYLGAVIDRSSRRVVFMASTEGGVEIEKVAEETPELIHKIALDPLTGPQPYQGRELAFKLGLTGKQVGQFTKIFMGLATLFLERDLAMVEINPLVVTKQGDLICLDGKLGADGNALFRQPELREMRDPSQEDAREAHAAQWELNYVALDGNIGCMVNGAGLAMGTMDIVKLHGGEPANFLDVGGGATKERVTEAFKIILSDDKVKAVFVNIFGGIVRCDLIADGIIGAVEEVGVNVPVVVRLEGNNAELGAKKLADSGLNIIAATSLTDAAQQVVAAVGAK</sequence>
<reference key="1">
    <citation type="journal article" date="2007" name="PLoS Genet.">
        <title>The complete genome sequence of Yersinia pseudotuberculosis IP31758, the causative agent of Far East scarlet-like fever.</title>
        <authorList>
            <person name="Eppinger M."/>
            <person name="Rosovitz M.J."/>
            <person name="Fricke W.F."/>
            <person name="Rasko D.A."/>
            <person name="Kokorina G."/>
            <person name="Fayolle C."/>
            <person name="Lindler L.E."/>
            <person name="Carniel E."/>
            <person name="Ravel J."/>
        </authorList>
    </citation>
    <scope>NUCLEOTIDE SEQUENCE [LARGE SCALE GENOMIC DNA]</scope>
    <source>
        <strain>IP 31758</strain>
    </source>
</reference>
<feature type="chain" id="PRO_1000082266" description="Succinate--CoA ligase [ADP-forming] subunit beta">
    <location>
        <begin position="1"/>
        <end position="388"/>
    </location>
</feature>
<feature type="domain" description="ATP-grasp" evidence="1">
    <location>
        <begin position="9"/>
        <end position="244"/>
    </location>
</feature>
<feature type="binding site" evidence="1">
    <location>
        <position position="46"/>
    </location>
    <ligand>
        <name>ATP</name>
        <dbReference type="ChEBI" id="CHEBI:30616"/>
    </ligand>
</feature>
<feature type="binding site" evidence="1">
    <location>
        <begin position="53"/>
        <end position="55"/>
    </location>
    <ligand>
        <name>ATP</name>
        <dbReference type="ChEBI" id="CHEBI:30616"/>
    </ligand>
</feature>
<feature type="binding site" evidence="1">
    <location>
        <position position="99"/>
    </location>
    <ligand>
        <name>ATP</name>
        <dbReference type="ChEBI" id="CHEBI:30616"/>
    </ligand>
</feature>
<feature type="binding site" evidence="1">
    <location>
        <position position="102"/>
    </location>
    <ligand>
        <name>ATP</name>
        <dbReference type="ChEBI" id="CHEBI:30616"/>
    </ligand>
</feature>
<feature type="binding site" evidence="1">
    <location>
        <position position="107"/>
    </location>
    <ligand>
        <name>ATP</name>
        <dbReference type="ChEBI" id="CHEBI:30616"/>
    </ligand>
</feature>
<feature type="binding site" evidence="1">
    <location>
        <position position="199"/>
    </location>
    <ligand>
        <name>Mg(2+)</name>
        <dbReference type="ChEBI" id="CHEBI:18420"/>
    </ligand>
</feature>
<feature type="binding site" evidence="1">
    <location>
        <position position="213"/>
    </location>
    <ligand>
        <name>Mg(2+)</name>
        <dbReference type="ChEBI" id="CHEBI:18420"/>
    </ligand>
</feature>
<feature type="binding site" evidence="1">
    <location>
        <position position="264"/>
    </location>
    <ligand>
        <name>substrate</name>
        <note>ligand shared with subunit alpha</note>
    </ligand>
</feature>
<feature type="binding site" evidence="1">
    <location>
        <begin position="321"/>
        <end position="323"/>
    </location>
    <ligand>
        <name>substrate</name>
        <note>ligand shared with subunit alpha</note>
    </ligand>
</feature>
<name>SUCC_YERP3</name>
<proteinExistence type="inferred from homology"/>
<protein>
    <recommendedName>
        <fullName evidence="1">Succinate--CoA ligase [ADP-forming] subunit beta</fullName>
        <ecNumber evidence="1">6.2.1.5</ecNumber>
    </recommendedName>
    <alternativeName>
        <fullName evidence="1">Succinyl-CoA synthetase subunit beta</fullName>
        <shortName evidence="1">SCS-beta</shortName>
    </alternativeName>
</protein>
<dbReference type="EC" id="6.2.1.5" evidence="1"/>
<dbReference type="EMBL" id="CP000720">
    <property type="protein sequence ID" value="ABS46777.1"/>
    <property type="molecule type" value="Genomic_DNA"/>
</dbReference>
<dbReference type="RefSeq" id="WP_002210728.1">
    <property type="nucleotide sequence ID" value="NC_009708.1"/>
</dbReference>
<dbReference type="SMR" id="A7FKR4"/>
<dbReference type="GeneID" id="57977251"/>
<dbReference type="KEGG" id="ypi:YpsIP31758_2879"/>
<dbReference type="HOGENOM" id="CLU_037430_0_2_6"/>
<dbReference type="UniPathway" id="UPA00223">
    <property type="reaction ID" value="UER00999"/>
</dbReference>
<dbReference type="Proteomes" id="UP000002412">
    <property type="component" value="Chromosome"/>
</dbReference>
<dbReference type="GO" id="GO:0005829">
    <property type="term" value="C:cytosol"/>
    <property type="evidence" value="ECO:0007669"/>
    <property type="project" value="TreeGrafter"/>
</dbReference>
<dbReference type="GO" id="GO:0042709">
    <property type="term" value="C:succinate-CoA ligase complex"/>
    <property type="evidence" value="ECO:0007669"/>
    <property type="project" value="TreeGrafter"/>
</dbReference>
<dbReference type="GO" id="GO:0005524">
    <property type="term" value="F:ATP binding"/>
    <property type="evidence" value="ECO:0007669"/>
    <property type="project" value="UniProtKB-UniRule"/>
</dbReference>
<dbReference type="GO" id="GO:0000287">
    <property type="term" value="F:magnesium ion binding"/>
    <property type="evidence" value="ECO:0007669"/>
    <property type="project" value="UniProtKB-UniRule"/>
</dbReference>
<dbReference type="GO" id="GO:0004775">
    <property type="term" value="F:succinate-CoA ligase (ADP-forming) activity"/>
    <property type="evidence" value="ECO:0007669"/>
    <property type="project" value="UniProtKB-UniRule"/>
</dbReference>
<dbReference type="GO" id="GO:0004776">
    <property type="term" value="F:succinate-CoA ligase (GDP-forming) activity"/>
    <property type="evidence" value="ECO:0007669"/>
    <property type="project" value="RHEA"/>
</dbReference>
<dbReference type="GO" id="GO:0006104">
    <property type="term" value="P:succinyl-CoA metabolic process"/>
    <property type="evidence" value="ECO:0007669"/>
    <property type="project" value="TreeGrafter"/>
</dbReference>
<dbReference type="GO" id="GO:0006099">
    <property type="term" value="P:tricarboxylic acid cycle"/>
    <property type="evidence" value="ECO:0007669"/>
    <property type="project" value="UniProtKB-UniRule"/>
</dbReference>
<dbReference type="FunFam" id="3.30.1490.20:FF:000002">
    <property type="entry name" value="Succinate--CoA ligase [ADP-forming] subunit beta"/>
    <property type="match status" value="1"/>
</dbReference>
<dbReference type="FunFam" id="3.30.470.20:FF:000002">
    <property type="entry name" value="Succinate--CoA ligase [ADP-forming] subunit beta"/>
    <property type="match status" value="1"/>
</dbReference>
<dbReference type="FunFam" id="3.40.50.261:FF:000001">
    <property type="entry name" value="Succinate--CoA ligase [ADP-forming] subunit beta"/>
    <property type="match status" value="1"/>
</dbReference>
<dbReference type="Gene3D" id="3.30.1490.20">
    <property type="entry name" value="ATP-grasp fold, A domain"/>
    <property type="match status" value="1"/>
</dbReference>
<dbReference type="Gene3D" id="3.30.470.20">
    <property type="entry name" value="ATP-grasp fold, B domain"/>
    <property type="match status" value="1"/>
</dbReference>
<dbReference type="Gene3D" id="3.40.50.261">
    <property type="entry name" value="Succinyl-CoA synthetase domains"/>
    <property type="match status" value="1"/>
</dbReference>
<dbReference type="HAMAP" id="MF_00558">
    <property type="entry name" value="Succ_CoA_beta"/>
    <property type="match status" value="1"/>
</dbReference>
<dbReference type="InterPro" id="IPR011761">
    <property type="entry name" value="ATP-grasp"/>
</dbReference>
<dbReference type="InterPro" id="IPR013650">
    <property type="entry name" value="ATP-grasp_succ-CoA_synth-type"/>
</dbReference>
<dbReference type="InterPro" id="IPR013815">
    <property type="entry name" value="ATP_grasp_subdomain_1"/>
</dbReference>
<dbReference type="InterPro" id="IPR017866">
    <property type="entry name" value="Succ-CoA_synthase_bsu_CS"/>
</dbReference>
<dbReference type="InterPro" id="IPR005811">
    <property type="entry name" value="SUCC_ACL_C"/>
</dbReference>
<dbReference type="InterPro" id="IPR005809">
    <property type="entry name" value="Succ_CoA_ligase-like_bsu"/>
</dbReference>
<dbReference type="InterPro" id="IPR016102">
    <property type="entry name" value="Succinyl-CoA_synth-like"/>
</dbReference>
<dbReference type="NCBIfam" id="NF001913">
    <property type="entry name" value="PRK00696.1"/>
    <property type="match status" value="1"/>
</dbReference>
<dbReference type="NCBIfam" id="TIGR01016">
    <property type="entry name" value="sucCoAbeta"/>
    <property type="match status" value="1"/>
</dbReference>
<dbReference type="PANTHER" id="PTHR11815:SF10">
    <property type="entry name" value="SUCCINATE--COA LIGASE [GDP-FORMING] SUBUNIT BETA, MITOCHONDRIAL"/>
    <property type="match status" value="1"/>
</dbReference>
<dbReference type="PANTHER" id="PTHR11815">
    <property type="entry name" value="SUCCINYL-COA SYNTHETASE BETA CHAIN"/>
    <property type="match status" value="1"/>
</dbReference>
<dbReference type="Pfam" id="PF08442">
    <property type="entry name" value="ATP-grasp_2"/>
    <property type="match status" value="1"/>
</dbReference>
<dbReference type="Pfam" id="PF00549">
    <property type="entry name" value="Ligase_CoA"/>
    <property type="match status" value="1"/>
</dbReference>
<dbReference type="PIRSF" id="PIRSF001554">
    <property type="entry name" value="SucCS_beta"/>
    <property type="match status" value="1"/>
</dbReference>
<dbReference type="SUPFAM" id="SSF56059">
    <property type="entry name" value="Glutathione synthetase ATP-binding domain-like"/>
    <property type="match status" value="1"/>
</dbReference>
<dbReference type="SUPFAM" id="SSF52210">
    <property type="entry name" value="Succinyl-CoA synthetase domains"/>
    <property type="match status" value="1"/>
</dbReference>
<dbReference type="PROSITE" id="PS50975">
    <property type="entry name" value="ATP_GRASP"/>
    <property type="match status" value="1"/>
</dbReference>
<dbReference type="PROSITE" id="PS01217">
    <property type="entry name" value="SUCCINYL_COA_LIG_3"/>
    <property type="match status" value="1"/>
</dbReference>
<gene>
    <name evidence="1" type="primary">sucC</name>
    <name type="ordered locus">YpsIP31758_2879</name>
</gene>
<evidence type="ECO:0000255" key="1">
    <source>
        <dbReference type="HAMAP-Rule" id="MF_00558"/>
    </source>
</evidence>